<name>RNH_SALPC</name>
<feature type="chain" id="PRO_1000194435" description="Ribonuclease H">
    <location>
        <begin position="1"/>
        <end position="155"/>
    </location>
</feature>
<feature type="domain" description="RNase H type-1" evidence="2">
    <location>
        <begin position="1"/>
        <end position="142"/>
    </location>
</feature>
<feature type="binding site" evidence="1">
    <location>
        <position position="10"/>
    </location>
    <ligand>
        <name>Mg(2+)</name>
        <dbReference type="ChEBI" id="CHEBI:18420"/>
        <label>1</label>
    </ligand>
</feature>
<feature type="binding site" evidence="1">
    <location>
        <position position="10"/>
    </location>
    <ligand>
        <name>Mg(2+)</name>
        <dbReference type="ChEBI" id="CHEBI:18420"/>
        <label>2</label>
    </ligand>
</feature>
<feature type="binding site" evidence="1">
    <location>
        <position position="48"/>
    </location>
    <ligand>
        <name>Mg(2+)</name>
        <dbReference type="ChEBI" id="CHEBI:18420"/>
        <label>1</label>
    </ligand>
</feature>
<feature type="binding site" evidence="1">
    <location>
        <position position="70"/>
    </location>
    <ligand>
        <name>Mg(2+)</name>
        <dbReference type="ChEBI" id="CHEBI:18420"/>
        <label>1</label>
    </ligand>
</feature>
<feature type="binding site" evidence="1">
    <location>
        <position position="134"/>
    </location>
    <ligand>
        <name>Mg(2+)</name>
        <dbReference type="ChEBI" id="CHEBI:18420"/>
        <label>2</label>
    </ligand>
</feature>
<comment type="function">
    <text evidence="1">Endonuclease that specifically degrades the RNA of RNA-DNA hybrids.</text>
</comment>
<comment type="catalytic activity">
    <reaction evidence="1">
        <text>Endonucleolytic cleavage to 5'-phosphomonoester.</text>
        <dbReference type="EC" id="3.1.26.4"/>
    </reaction>
</comment>
<comment type="cofactor">
    <cofactor evidence="1">
        <name>Mg(2+)</name>
        <dbReference type="ChEBI" id="CHEBI:18420"/>
    </cofactor>
    <text evidence="1">Binds 1 Mg(2+) ion per subunit. May bind a second metal ion at a regulatory site, or after substrate binding.</text>
</comment>
<comment type="subunit">
    <text evidence="1">Monomer.</text>
</comment>
<comment type="subcellular location">
    <subcellularLocation>
        <location evidence="1">Cytoplasm</location>
    </subcellularLocation>
</comment>
<comment type="similarity">
    <text evidence="1">Belongs to the RNase H family.</text>
</comment>
<dbReference type="EC" id="3.1.26.4" evidence="1"/>
<dbReference type="EMBL" id="CP000857">
    <property type="protein sequence ID" value="ACN44461.1"/>
    <property type="molecule type" value="Genomic_DNA"/>
</dbReference>
<dbReference type="RefSeq" id="WP_000917871.1">
    <property type="nucleotide sequence ID" value="NC_012125.1"/>
</dbReference>
<dbReference type="SMR" id="C0Q6N2"/>
<dbReference type="KEGG" id="sei:SPC_0273"/>
<dbReference type="HOGENOM" id="CLU_030894_6_0_6"/>
<dbReference type="Proteomes" id="UP000001599">
    <property type="component" value="Chromosome"/>
</dbReference>
<dbReference type="GO" id="GO:0005737">
    <property type="term" value="C:cytoplasm"/>
    <property type="evidence" value="ECO:0007669"/>
    <property type="project" value="UniProtKB-SubCell"/>
</dbReference>
<dbReference type="GO" id="GO:0000287">
    <property type="term" value="F:magnesium ion binding"/>
    <property type="evidence" value="ECO:0007669"/>
    <property type="project" value="UniProtKB-UniRule"/>
</dbReference>
<dbReference type="GO" id="GO:0003676">
    <property type="term" value="F:nucleic acid binding"/>
    <property type="evidence" value="ECO:0007669"/>
    <property type="project" value="InterPro"/>
</dbReference>
<dbReference type="GO" id="GO:0004523">
    <property type="term" value="F:RNA-DNA hybrid ribonuclease activity"/>
    <property type="evidence" value="ECO:0007669"/>
    <property type="project" value="UniProtKB-UniRule"/>
</dbReference>
<dbReference type="GO" id="GO:0043137">
    <property type="term" value="P:DNA replication, removal of RNA primer"/>
    <property type="evidence" value="ECO:0007669"/>
    <property type="project" value="TreeGrafter"/>
</dbReference>
<dbReference type="CDD" id="cd09278">
    <property type="entry name" value="RNase_HI_prokaryote_like"/>
    <property type="match status" value="1"/>
</dbReference>
<dbReference type="FunFam" id="3.30.420.10:FF:000008">
    <property type="entry name" value="Ribonuclease H"/>
    <property type="match status" value="1"/>
</dbReference>
<dbReference type="Gene3D" id="3.30.420.10">
    <property type="entry name" value="Ribonuclease H-like superfamily/Ribonuclease H"/>
    <property type="match status" value="1"/>
</dbReference>
<dbReference type="HAMAP" id="MF_00042">
    <property type="entry name" value="RNase_H"/>
    <property type="match status" value="1"/>
</dbReference>
<dbReference type="InterPro" id="IPR050092">
    <property type="entry name" value="RNase_H"/>
</dbReference>
<dbReference type="InterPro" id="IPR012337">
    <property type="entry name" value="RNaseH-like_sf"/>
</dbReference>
<dbReference type="InterPro" id="IPR002156">
    <property type="entry name" value="RNaseH_domain"/>
</dbReference>
<dbReference type="InterPro" id="IPR036397">
    <property type="entry name" value="RNaseH_sf"/>
</dbReference>
<dbReference type="InterPro" id="IPR022892">
    <property type="entry name" value="RNaseHI"/>
</dbReference>
<dbReference type="NCBIfam" id="NF001236">
    <property type="entry name" value="PRK00203.1"/>
    <property type="match status" value="1"/>
</dbReference>
<dbReference type="PANTHER" id="PTHR10642">
    <property type="entry name" value="RIBONUCLEASE H1"/>
    <property type="match status" value="1"/>
</dbReference>
<dbReference type="PANTHER" id="PTHR10642:SF26">
    <property type="entry name" value="RIBONUCLEASE H1"/>
    <property type="match status" value="1"/>
</dbReference>
<dbReference type="Pfam" id="PF00075">
    <property type="entry name" value="RNase_H"/>
    <property type="match status" value="1"/>
</dbReference>
<dbReference type="SUPFAM" id="SSF53098">
    <property type="entry name" value="Ribonuclease H-like"/>
    <property type="match status" value="1"/>
</dbReference>
<dbReference type="PROSITE" id="PS50879">
    <property type="entry name" value="RNASE_H_1"/>
    <property type="match status" value="1"/>
</dbReference>
<keyword id="KW-0963">Cytoplasm</keyword>
<keyword id="KW-0255">Endonuclease</keyword>
<keyword id="KW-0378">Hydrolase</keyword>
<keyword id="KW-0460">Magnesium</keyword>
<keyword id="KW-0479">Metal-binding</keyword>
<keyword id="KW-0540">Nuclease</keyword>
<sequence>MLKQVEIFTDGSCLGNPGPGGYGAILRYRGHEKTFSEGYTLTTNNRMELMAAIVALEALKEHCEVTLSTDSQYVRQGITQWIHNWKKRGWKTAEKKPVKNVDLWKRLDAALGQHQIKWVWVKGHAGHPENERCDELARAAAMHPTQEDSGYQAEA</sequence>
<protein>
    <recommendedName>
        <fullName evidence="1">Ribonuclease H</fullName>
        <shortName evidence="1">RNase H</shortName>
        <ecNumber evidence="1">3.1.26.4</ecNumber>
    </recommendedName>
</protein>
<proteinExistence type="inferred from homology"/>
<reference key="1">
    <citation type="journal article" date="2009" name="PLoS ONE">
        <title>Salmonella paratyphi C: genetic divergence from Salmonella choleraesuis and pathogenic convergence with Salmonella typhi.</title>
        <authorList>
            <person name="Liu W.-Q."/>
            <person name="Feng Y."/>
            <person name="Wang Y."/>
            <person name="Zou Q.-H."/>
            <person name="Chen F."/>
            <person name="Guo J.-T."/>
            <person name="Peng Y.-H."/>
            <person name="Jin Y."/>
            <person name="Li Y.-G."/>
            <person name="Hu S.-N."/>
            <person name="Johnston R.N."/>
            <person name="Liu G.-R."/>
            <person name="Liu S.-L."/>
        </authorList>
    </citation>
    <scope>NUCLEOTIDE SEQUENCE [LARGE SCALE GENOMIC DNA]</scope>
    <source>
        <strain>RKS4594</strain>
    </source>
</reference>
<evidence type="ECO:0000255" key="1">
    <source>
        <dbReference type="HAMAP-Rule" id="MF_00042"/>
    </source>
</evidence>
<evidence type="ECO:0000255" key="2">
    <source>
        <dbReference type="PROSITE-ProRule" id="PRU00408"/>
    </source>
</evidence>
<gene>
    <name evidence="1" type="primary">rnhA</name>
    <name type="ordered locus">SPC_0273</name>
</gene>
<accession>C0Q6N2</accession>
<organism>
    <name type="scientific">Salmonella paratyphi C (strain RKS4594)</name>
    <dbReference type="NCBI Taxonomy" id="476213"/>
    <lineage>
        <taxon>Bacteria</taxon>
        <taxon>Pseudomonadati</taxon>
        <taxon>Pseudomonadota</taxon>
        <taxon>Gammaproteobacteria</taxon>
        <taxon>Enterobacterales</taxon>
        <taxon>Enterobacteriaceae</taxon>
        <taxon>Salmonella</taxon>
    </lineage>
</organism>